<organism>
    <name type="scientific">Neisseria gonorrhoeae (strain NCCP11945)</name>
    <dbReference type="NCBI Taxonomy" id="521006"/>
    <lineage>
        <taxon>Bacteria</taxon>
        <taxon>Pseudomonadati</taxon>
        <taxon>Pseudomonadota</taxon>
        <taxon>Betaproteobacteria</taxon>
        <taxon>Neisseriales</taxon>
        <taxon>Neisseriaceae</taxon>
        <taxon>Neisseria</taxon>
    </lineage>
</organism>
<comment type="similarity">
    <text evidence="1">Belongs to the SlyX family.</text>
</comment>
<protein>
    <recommendedName>
        <fullName evidence="1">Protein SlyX homolog</fullName>
    </recommendedName>
</protein>
<sequence length="74" mass="8679">MDAVQELERRIVELEIQTALQEDVISGLNAMVAELRQTLDLQQAQLRLLYQKMQDRNPDAQEPYSLRDEIPPHY</sequence>
<reference key="1">
    <citation type="journal article" date="2008" name="J. Bacteriol.">
        <title>Complete genome sequence of Neisseria gonorrhoeae NCCP11945.</title>
        <authorList>
            <person name="Chung G.T."/>
            <person name="Yoo J.S."/>
            <person name="Oh H.B."/>
            <person name="Lee Y.S."/>
            <person name="Cha S.H."/>
            <person name="Kim S.J."/>
            <person name="Yoo C.K."/>
        </authorList>
    </citation>
    <scope>NUCLEOTIDE SEQUENCE [LARGE SCALE GENOMIC DNA]</scope>
    <source>
        <strain>NCCP11945</strain>
    </source>
</reference>
<feature type="chain" id="PRO_1000195842" description="Protein SlyX homolog">
    <location>
        <begin position="1"/>
        <end position="74"/>
    </location>
</feature>
<feature type="region of interest" description="Disordered" evidence="2">
    <location>
        <begin position="54"/>
        <end position="74"/>
    </location>
</feature>
<name>SLYX_NEIG2</name>
<gene>
    <name evidence="1" type="primary">slyX</name>
    <name type="ordered locus">NGK_2219</name>
</gene>
<proteinExistence type="inferred from homology"/>
<evidence type="ECO:0000255" key="1">
    <source>
        <dbReference type="HAMAP-Rule" id="MF_00715"/>
    </source>
</evidence>
<evidence type="ECO:0000256" key="2">
    <source>
        <dbReference type="SAM" id="MobiDB-lite"/>
    </source>
</evidence>
<dbReference type="EMBL" id="CP001050">
    <property type="protein sequence ID" value="ACF30823.1"/>
    <property type="molecule type" value="Genomic_DNA"/>
</dbReference>
<dbReference type="RefSeq" id="WP_003686929.1">
    <property type="nucleotide sequence ID" value="NC_011035.1"/>
</dbReference>
<dbReference type="SMR" id="B4RQL3"/>
<dbReference type="KEGG" id="ngk:NGK_2219"/>
<dbReference type="HOGENOM" id="CLU_180796_3_1_4"/>
<dbReference type="Proteomes" id="UP000002564">
    <property type="component" value="Chromosome"/>
</dbReference>
<dbReference type="Gene3D" id="1.20.5.300">
    <property type="match status" value="1"/>
</dbReference>
<dbReference type="HAMAP" id="MF_00715">
    <property type="entry name" value="SlyX"/>
    <property type="match status" value="1"/>
</dbReference>
<dbReference type="InterPro" id="IPR007236">
    <property type="entry name" value="SlyX"/>
</dbReference>
<dbReference type="NCBIfam" id="NF003316">
    <property type="entry name" value="PRK04325.1"/>
    <property type="match status" value="1"/>
</dbReference>
<dbReference type="PANTHER" id="PTHR36508">
    <property type="entry name" value="PROTEIN SLYX"/>
    <property type="match status" value="1"/>
</dbReference>
<dbReference type="PANTHER" id="PTHR36508:SF1">
    <property type="entry name" value="PROTEIN SLYX"/>
    <property type="match status" value="1"/>
</dbReference>
<dbReference type="Pfam" id="PF04102">
    <property type="entry name" value="SlyX"/>
    <property type="match status" value="1"/>
</dbReference>
<accession>B4RQL3</accession>